<organism>
    <name type="scientific">Shewanella baltica (strain OS185)</name>
    <dbReference type="NCBI Taxonomy" id="402882"/>
    <lineage>
        <taxon>Bacteria</taxon>
        <taxon>Pseudomonadati</taxon>
        <taxon>Pseudomonadota</taxon>
        <taxon>Gammaproteobacteria</taxon>
        <taxon>Alteromonadales</taxon>
        <taxon>Shewanellaceae</taxon>
        <taxon>Shewanella</taxon>
    </lineage>
</organism>
<accession>A6WP02</accession>
<reference key="1">
    <citation type="submission" date="2007-07" db="EMBL/GenBank/DDBJ databases">
        <title>Complete sequence of chromosome of Shewanella baltica OS185.</title>
        <authorList>
            <consortium name="US DOE Joint Genome Institute"/>
            <person name="Copeland A."/>
            <person name="Lucas S."/>
            <person name="Lapidus A."/>
            <person name="Barry K."/>
            <person name="Glavina del Rio T."/>
            <person name="Dalin E."/>
            <person name="Tice H."/>
            <person name="Pitluck S."/>
            <person name="Sims D."/>
            <person name="Brettin T."/>
            <person name="Bruce D."/>
            <person name="Detter J.C."/>
            <person name="Han C."/>
            <person name="Schmutz J."/>
            <person name="Larimer F."/>
            <person name="Land M."/>
            <person name="Hauser L."/>
            <person name="Kyrpides N."/>
            <person name="Mikhailova N."/>
            <person name="Brettar I."/>
            <person name="Rodrigues J."/>
            <person name="Konstantinidis K."/>
            <person name="Tiedje J."/>
            <person name="Richardson P."/>
        </authorList>
    </citation>
    <scope>NUCLEOTIDE SEQUENCE [LARGE SCALE GENOMIC DNA]</scope>
    <source>
        <strain>OS185</strain>
    </source>
</reference>
<protein>
    <recommendedName>
        <fullName evidence="1">UPF0227 protein Shew185_2404</fullName>
    </recommendedName>
</protein>
<evidence type="ECO:0000255" key="1">
    <source>
        <dbReference type="HAMAP-Rule" id="MF_01047"/>
    </source>
</evidence>
<dbReference type="EMBL" id="CP000753">
    <property type="protein sequence ID" value="ABS08541.1"/>
    <property type="molecule type" value="Genomic_DNA"/>
</dbReference>
<dbReference type="RefSeq" id="WP_012089351.1">
    <property type="nucleotide sequence ID" value="NC_009665.1"/>
</dbReference>
<dbReference type="SMR" id="A6WP02"/>
<dbReference type="ESTHER" id="sheb2-y1944">
    <property type="family name" value="abh_upf00227"/>
</dbReference>
<dbReference type="KEGG" id="sbm:Shew185_2404"/>
<dbReference type="HOGENOM" id="CLU_128769_0_0_6"/>
<dbReference type="Gene3D" id="3.40.50.1820">
    <property type="entry name" value="alpha/beta hydrolase"/>
    <property type="match status" value="1"/>
</dbReference>
<dbReference type="HAMAP" id="MF_01047">
    <property type="entry name" value="UPF0227"/>
    <property type="match status" value="1"/>
</dbReference>
<dbReference type="InterPro" id="IPR029058">
    <property type="entry name" value="AB_hydrolase_fold"/>
</dbReference>
<dbReference type="InterPro" id="IPR022987">
    <property type="entry name" value="UPF0227"/>
</dbReference>
<dbReference type="InterPro" id="IPR008886">
    <property type="entry name" value="UPF0227/Esterase_YqiA"/>
</dbReference>
<dbReference type="NCBIfam" id="NF003431">
    <property type="entry name" value="PRK04940.1"/>
    <property type="match status" value="1"/>
</dbReference>
<dbReference type="PANTHER" id="PTHR35602">
    <property type="entry name" value="ESTERASE YQIA-RELATED"/>
    <property type="match status" value="1"/>
</dbReference>
<dbReference type="PANTHER" id="PTHR35602:SF2">
    <property type="entry name" value="UPF0227 PROTEIN YCFP"/>
    <property type="match status" value="1"/>
</dbReference>
<dbReference type="Pfam" id="PF05728">
    <property type="entry name" value="UPF0227"/>
    <property type="match status" value="1"/>
</dbReference>
<feature type="chain" id="PRO_1000064297" description="UPF0227 protein Shew185_2404">
    <location>
        <begin position="1"/>
        <end position="179"/>
    </location>
</feature>
<sequence length="179" mass="20561">MIFYLHGFDATSPGNHEKMRQLQFIDPDVRLVSYSTLHPKHDMQHLLKEVAKQMKHSDDPAPLMVGVGLGAYWAERIGFLNGLKSVLINPNLHPEENMQGKIDRPEEYADIANKCVSQFREKNTHKAMCIFSVNDEMFDNQQLASELSAYYSIDWDDVQPHKFHQLAAHLPKIKAFKLA</sequence>
<gene>
    <name type="ordered locus">Shew185_2404</name>
</gene>
<comment type="similarity">
    <text evidence="1">Belongs to the UPF0227 family.</text>
</comment>
<name>Y2404_SHEB8</name>
<proteinExistence type="inferred from homology"/>